<organism>
    <name type="scientific">Burkholderia pseudomallei (strain 1106a)</name>
    <dbReference type="NCBI Taxonomy" id="357348"/>
    <lineage>
        <taxon>Bacteria</taxon>
        <taxon>Pseudomonadati</taxon>
        <taxon>Pseudomonadota</taxon>
        <taxon>Betaproteobacteria</taxon>
        <taxon>Burkholderiales</taxon>
        <taxon>Burkholderiaceae</taxon>
        <taxon>Burkholderia</taxon>
        <taxon>pseudomallei group</taxon>
    </lineage>
</organism>
<dbReference type="EMBL" id="CP000572">
    <property type="protein sequence ID" value="ABN90757.1"/>
    <property type="molecule type" value="Genomic_DNA"/>
</dbReference>
<dbReference type="RefSeq" id="WP_004186443.1">
    <property type="nucleotide sequence ID" value="NC_009076.1"/>
</dbReference>
<dbReference type="SMR" id="A3NT59"/>
<dbReference type="GeneID" id="93059654"/>
<dbReference type="KEGG" id="bpl:BURPS1106A_1251"/>
<dbReference type="HOGENOM" id="CLU_077094_2_0_4"/>
<dbReference type="Proteomes" id="UP000006738">
    <property type="component" value="Chromosome I"/>
</dbReference>
<dbReference type="GO" id="GO:0005886">
    <property type="term" value="C:plasma membrane"/>
    <property type="evidence" value="ECO:0007669"/>
    <property type="project" value="UniProtKB-SubCell"/>
</dbReference>
<dbReference type="GO" id="GO:0005524">
    <property type="term" value="F:ATP binding"/>
    <property type="evidence" value="ECO:0007669"/>
    <property type="project" value="UniProtKB-UniRule"/>
</dbReference>
<dbReference type="GO" id="GO:0008556">
    <property type="term" value="F:P-type potassium transmembrane transporter activity"/>
    <property type="evidence" value="ECO:0007669"/>
    <property type="project" value="InterPro"/>
</dbReference>
<dbReference type="HAMAP" id="MF_00276">
    <property type="entry name" value="KdpC"/>
    <property type="match status" value="1"/>
</dbReference>
<dbReference type="InterPro" id="IPR003820">
    <property type="entry name" value="KdpC"/>
</dbReference>
<dbReference type="NCBIfam" id="TIGR00681">
    <property type="entry name" value="kdpC"/>
    <property type="match status" value="1"/>
</dbReference>
<dbReference type="NCBIfam" id="NF001454">
    <property type="entry name" value="PRK00315.1"/>
    <property type="match status" value="1"/>
</dbReference>
<dbReference type="PANTHER" id="PTHR30042">
    <property type="entry name" value="POTASSIUM-TRANSPORTING ATPASE C CHAIN"/>
    <property type="match status" value="1"/>
</dbReference>
<dbReference type="PANTHER" id="PTHR30042:SF2">
    <property type="entry name" value="POTASSIUM-TRANSPORTING ATPASE KDPC SUBUNIT"/>
    <property type="match status" value="1"/>
</dbReference>
<dbReference type="Pfam" id="PF02669">
    <property type="entry name" value="KdpC"/>
    <property type="match status" value="1"/>
</dbReference>
<dbReference type="PIRSF" id="PIRSF001296">
    <property type="entry name" value="K_ATPase_KdpC"/>
    <property type="match status" value="1"/>
</dbReference>
<comment type="function">
    <text evidence="1">Part of the high-affinity ATP-driven potassium transport (or Kdp) system, which catalyzes the hydrolysis of ATP coupled with the electrogenic transport of potassium into the cytoplasm. This subunit acts as a catalytic chaperone that increases the ATP-binding affinity of the ATP-hydrolyzing subunit KdpB by the formation of a transient KdpB/KdpC/ATP ternary complex.</text>
</comment>
<comment type="subunit">
    <text evidence="1">The system is composed of three essential subunits: KdpA, KdpB and KdpC.</text>
</comment>
<comment type="subcellular location">
    <subcellularLocation>
        <location evidence="1">Cell inner membrane</location>
        <topology evidence="1">Single-pass membrane protein</topology>
    </subcellularLocation>
</comment>
<comment type="similarity">
    <text evidence="1">Belongs to the KdpC family.</text>
</comment>
<gene>
    <name evidence="1" type="primary">kdpC</name>
    <name type="ordered locus">BURPS1106A_1251</name>
</gene>
<name>KDPC_BURP0</name>
<keyword id="KW-0067">ATP-binding</keyword>
<keyword id="KW-0997">Cell inner membrane</keyword>
<keyword id="KW-1003">Cell membrane</keyword>
<keyword id="KW-0406">Ion transport</keyword>
<keyword id="KW-0472">Membrane</keyword>
<keyword id="KW-0547">Nucleotide-binding</keyword>
<keyword id="KW-0630">Potassium</keyword>
<keyword id="KW-0633">Potassium transport</keyword>
<keyword id="KW-0812">Transmembrane</keyword>
<keyword id="KW-1133">Transmembrane helix</keyword>
<keyword id="KW-0813">Transport</keyword>
<feature type="chain" id="PRO_1000022273" description="Potassium-transporting ATPase KdpC subunit">
    <location>
        <begin position="1"/>
        <end position="193"/>
    </location>
</feature>
<feature type="transmembrane region" description="Helical" evidence="1">
    <location>
        <begin position="7"/>
        <end position="27"/>
    </location>
</feature>
<protein>
    <recommendedName>
        <fullName evidence="1">Potassium-transporting ATPase KdpC subunit</fullName>
    </recommendedName>
    <alternativeName>
        <fullName evidence="1">ATP phosphohydrolase [potassium-transporting] C chain</fullName>
    </alternativeName>
    <alternativeName>
        <fullName evidence="1">Potassium-binding and translocating subunit C</fullName>
    </alternativeName>
    <alternativeName>
        <fullName evidence="1">Potassium-translocating ATPase C chain</fullName>
    </alternativeName>
</protein>
<proteinExistence type="inferred from homology"/>
<evidence type="ECO:0000255" key="1">
    <source>
        <dbReference type="HAMAP-Rule" id="MF_00276"/>
    </source>
</evidence>
<sequence length="193" mass="20105">MKSLFRPLIVVFVVLVAVTGLAYPAVMTVFGQAVFPAQANGSLIEKGGRVVGSALIGQQFDAPQYFWGRLSATSPMPYNAAGSGGSNLGPLNPALKDQVKSRLDALKAAGTDLSQPVPVDLVTASASGLDPEISPAAADYQVARVARARKMADADVRRLVADHTSGRQFGVLGEPRVNVLKLNLALDAAQAAH</sequence>
<reference key="1">
    <citation type="journal article" date="2010" name="Genome Biol. Evol.">
        <title>Continuing evolution of Burkholderia mallei through genome reduction and large-scale rearrangements.</title>
        <authorList>
            <person name="Losada L."/>
            <person name="Ronning C.M."/>
            <person name="DeShazer D."/>
            <person name="Woods D."/>
            <person name="Fedorova N."/>
            <person name="Kim H.S."/>
            <person name="Shabalina S.A."/>
            <person name="Pearson T.R."/>
            <person name="Brinkac L."/>
            <person name="Tan P."/>
            <person name="Nandi T."/>
            <person name="Crabtree J."/>
            <person name="Badger J."/>
            <person name="Beckstrom-Sternberg S."/>
            <person name="Saqib M."/>
            <person name="Schutzer S.E."/>
            <person name="Keim P."/>
            <person name="Nierman W.C."/>
        </authorList>
    </citation>
    <scope>NUCLEOTIDE SEQUENCE [LARGE SCALE GENOMIC DNA]</scope>
    <source>
        <strain>1106a</strain>
    </source>
</reference>
<accession>A3NT59</accession>